<dbReference type="EC" id="2.3.1.48" evidence="5 6 7"/>
<dbReference type="EMBL" id="CU329671">
    <property type="protein sequence ID" value="CAB46776.1"/>
    <property type="molecule type" value="Genomic_DNA"/>
</dbReference>
<dbReference type="PIR" id="T40279">
    <property type="entry name" value="T40279"/>
</dbReference>
<dbReference type="RefSeq" id="NP_596749.1">
    <property type="nucleotide sequence ID" value="NM_001023769.2"/>
</dbReference>
<dbReference type="SMR" id="Q9Y7Y5"/>
<dbReference type="BioGRID" id="277461">
    <property type="interactions" value="65"/>
</dbReference>
<dbReference type="FunCoup" id="Q9Y7Y5">
    <property type="interactions" value="239"/>
</dbReference>
<dbReference type="STRING" id="284812.Q9Y7Y5"/>
<dbReference type="PaxDb" id="4896-SPBC342.06c.1"/>
<dbReference type="EnsemblFungi" id="SPBC342.06c.1">
    <property type="protein sequence ID" value="SPBC342.06c.1:pep"/>
    <property type="gene ID" value="SPBC342.06c"/>
</dbReference>
<dbReference type="GeneID" id="2540945"/>
<dbReference type="KEGG" id="spo:2540945"/>
<dbReference type="PomBase" id="SPBC342.06c">
    <property type="gene designation" value="rtt109"/>
</dbReference>
<dbReference type="VEuPathDB" id="FungiDB:SPBC342.06c"/>
<dbReference type="eggNOG" id="KOG4534">
    <property type="taxonomic scope" value="Eukaryota"/>
</dbReference>
<dbReference type="HOGENOM" id="CLU_740004_0_0_1"/>
<dbReference type="InParanoid" id="Q9Y7Y5"/>
<dbReference type="OMA" id="FARAQPQ"/>
<dbReference type="PhylomeDB" id="Q9Y7Y5"/>
<dbReference type="PRO" id="PR:Q9Y7Y5"/>
<dbReference type="Proteomes" id="UP000002485">
    <property type="component" value="Chromosome II"/>
</dbReference>
<dbReference type="GO" id="GO:0000785">
    <property type="term" value="C:chromatin"/>
    <property type="evidence" value="ECO:0000314"/>
    <property type="project" value="PomBase"/>
</dbReference>
<dbReference type="GO" id="GO:0005634">
    <property type="term" value="C:nucleus"/>
    <property type="evidence" value="ECO:0007005"/>
    <property type="project" value="PomBase"/>
</dbReference>
<dbReference type="GO" id="GO:0032931">
    <property type="term" value="F:histone H3K56 acetyltransferase activity"/>
    <property type="evidence" value="ECO:0000314"/>
    <property type="project" value="UniProtKB"/>
</dbReference>
<dbReference type="GO" id="GO:0006974">
    <property type="term" value="P:DNA damage response"/>
    <property type="evidence" value="ECO:0000315"/>
    <property type="project" value="PomBase"/>
</dbReference>
<dbReference type="GO" id="GO:0006355">
    <property type="term" value="P:regulation of DNA-templated transcription"/>
    <property type="evidence" value="ECO:0007669"/>
    <property type="project" value="InterPro"/>
</dbReference>
<dbReference type="InterPro" id="IPR051236">
    <property type="entry name" value="HAT_RTT109-like"/>
</dbReference>
<dbReference type="InterPro" id="IPR013178">
    <property type="entry name" value="Histone_AcTrfase_Rtt109/CBP"/>
</dbReference>
<dbReference type="InterPro" id="IPR016849">
    <property type="entry name" value="Rtt109"/>
</dbReference>
<dbReference type="PANTHER" id="PTHR31571">
    <property type="entry name" value="ALTERED INHERITANCE OF MITOCHONDRIA PROTEIN 6"/>
    <property type="match status" value="1"/>
</dbReference>
<dbReference type="PANTHER" id="PTHR31571:SF2">
    <property type="entry name" value="HISTONE ACETYLTRANSFERASE RTT109"/>
    <property type="match status" value="1"/>
</dbReference>
<dbReference type="Pfam" id="PF08214">
    <property type="entry name" value="HAT_KAT11"/>
    <property type="match status" value="1"/>
</dbReference>
<dbReference type="SMART" id="SM01250">
    <property type="entry name" value="KAT11"/>
    <property type="match status" value="1"/>
</dbReference>
<dbReference type="PROSITE" id="PS51728">
    <property type="entry name" value="RTT109_HAT"/>
    <property type="match status" value="1"/>
</dbReference>
<proteinExistence type="evidence at protein level"/>
<name>RT109_SCHPO</name>
<feature type="chain" id="PRO_0000353836" description="Histone acetyltransferase rtt109">
    <location>
        <begin position="1"/>
        <end position="369"/>
    </location>
</feature>
<feature type="domain" description="Rtt109-type HAT" evidence="2">
    <location>
        <begin position="1"/>
        <end position="346"/>
    </location>
</feature>
<feature type="region of interest" description="Disordered" evidence="3">
    <location>
        <begin position="345"/>
        <end position="369"/>
    </location>
</feature>
<feature type="active site" description="Proton donor/acceptor" evidence="1">
    <location>
        <position position="219"/>
    </location>
</feature>
<feature type="binding site" evidence="1">
    <location>
        <position position="117"/>
    </location>
    <ligand>
        <name>acetyl-CoA</name>
        <dbReference type="ChEBI" id="CHEBI:57288"/>
    </ligand>
</feature>
<feature type="binding site" evidence="1">
    <location>
        <begin position="136"/>
        <end position="138"/>
    </location>
    <ligand>
        <name>acetyl-CoA</name>
        <dbReference type="ChEBI" id="CHEBI:57288"/>
    </ligand>
</feature>
<feature type="binding site" evidence="1">
    <location>
        <position position="146"/>
    </location>
    <ligand>
        <name>acetyl-CoA</name>
        <dbReference type="ChEBI" id="CHEBI:57288"/>
    </ligand>
</feature>
<feature type="modified residue" description="N6-acetyllysine; by autocatalysis" evidence="1">
    <location>
        <position position="221"/>
    </location>
</feature>
<keyword id="KW-0007">Acetylation</keyword>
<keyword id="KW-0227">DNA damage</keyword>
<keyword id="KW-0539">Nucleus</keyword>
<keyword id="KW-1185">Reference proteome</keyword>
<keyword id="KW-0804">Transcription</keyword>
<keyword id="KW-0805">Transcription regulation</keyword>
<keyword id="KW-0808">Transferase</keyword>
<comment type="function">
    <text evidence="5 6 7">Histone chaperone-dependent acetylase that modifies 'Lys-56' of histone H3 (H3K56ac), which occurs predominantly in newly synthesized H3 molecule during G1, S-phase and G2/M of cell cycle (PubMed:17369611, PubMed:17690098, PubMed:20656950). Histone H3 'Lys-56' acetylation is required for S-phase-linked DNA damage tolerance and proper silencing in pericentromeric heterochromatin (PubMed:17369611).</text>
</comment>
<comment type="catalytic activity">
    <reaction evidence="5 6 7">
        <text>L-lysyl-[histone] + acetyl-CoA = N(6)-acetyl-L-lysyl-[histone] + CoA + H(+)</text>
        <dbReference type="Rhea" id="RHEA:21992"/>
        <dbReference type="Rhea" id="RHEA-COMP:9845"/>
        <dbReference type="Rhea" id="RHEA-COMP:11338"/>
        <dbReference type="ChEBI" id="CHEBI:15378"/>
        <dbReference type="ChEBI" id="CHEBI:29969"/>
        <dbReference type="ChEBI" id="CHEBI:57287"/>
        <dbReference type="ChEBI" id="CHEBI:57288"/>
        <dbReference type="ChEBI" id="CHEBI:61930"/>
        <dbReference type="EC" id="2.3.1.48"/>
    </reaction>
    <physiologicalReaction direction="left-to-right" evidence="5 6 7">
        <dbReference type="Rhea" id="RHEA:21993"/>
    </physiologicalReaction>
</comment>
<comment type="catalytic activity">
    <reaction evidence="1">
        <text>L-lysyl-[protein] + acetyl-CoA = N(6)-acetyl-L-lysyl-[protein] + CoA + H(+)</text>
        <dbReference type="Rhea" id="RHEA:45948"/>
        <dbReference type="Rhea" id="RHEA-COMP:9752"/>
        <dbReference type="Rhea" id="RHEA-COMP:10731"/>
        <dbReference type="ChEBI" id="CHEBI:15378"/>
        <dbReference type="ChEBI" id="CHEBI:29969"/>
        <dbReference type="ChEBI" id="CHEBI:57287"/>
        <dbReference type="ChEBI" id="CHEBI:57288"/>
        <dbReference type="ChEBI" id="CHEBI:61930"/>
        <dbReference type="EC" id="2.3.1.48"/>
    </reaction>
    <physiologicalReaction direction="left-to-right" evidence="1">
        <dbReference type="Rhea" id="RHEA:45949"/>
    </physiologicalReaction>
</comment>
<comment type="subcellular location">
    <subcellularLocation>
        <location evidence="4">Nucleus</location>
    </subcellularLocation>
</comment>
<comment type="similarity">
    <text evidence="8">Belongs to the RTT109 family.</text>
</comment>
<protein>
    <recommendedName>
        <fullName>Histone acetyltransferase rtt109</fullName>
        <ecNumber evidence="5 6 7">2.3.1.48</ecNumber>
    </recommendedName>
</protein>
<evidence type="ECO:0000250" key="1">
    <source>
        <dbReference type="UniProtKB" id="Q07794"/>
    </source>
</evidence>
<evidence type="ECO:0000255" key="2">
    <source>
        <dbReference type="PROSITE-ProRule" id="PRU01064"/>
    </source>
</evidence>
<evidence type="ECO:0000256" key="3">
    <source>
        <dbReference type="SAM" id="MobiDB-lite"/>
    </source>
</evidence>
<evidence type="ECO:0000269" key="4">
    <source>
    </source>
</evidence>
<evidence type="ECO:0000269" key="5">
    <source>
    </source>
</evidence>
<evidence type="ECO:0000269" key="6">
    <source>
    </source>
</evidence>
<evidence type="ECO:0000269" key="7">
    <source>
    </source>
</evidence>
<evidence type="ECO:0000305" key="8"/>
<organism>
    <name type="scientific">Schizosaccharomyces pombe (strain 972 / ATCC 24843)</name>
    <name type="common">Fission yeast</name>
    <dbReference type="NCBI Taxonomy" id="284812"/>
    <lineage>
        <taxon>Eukaryota</taxon>
        <taxon>Fungi</taxon>
        <taxon>Dikarya</taxon>
        <taxon>Ascomycota</taxon>
        <taxon>Taphrinomycotina</taxon>
        <taxon>Schizosaccharomycetes</taxon>
        <taxon>Schizosaccharomycetales</taxon>
        <taxon>Schizosaccharomycetaceae</taxon>
        <taxon>Schizosaccharomyces</taxon>
    </lineage>
</organism>
<gene>
    <name type="primary">rtt109</name>
    <name type="synonym">kat11</name>
    <name type="ORF">SPBC342.06c</name>
</gene>
<accession>Q9Y7Y5</accession>
<reference key="1">
    <citation type="journal article" date="2002" name="Nature">
        <title>The genome sequence of Schizosaccharomyces pombe.</title>
        <authorList>
            <person name="Wood V."/>
            <person name="Gwilliam R."/>
            <person name="Rajandream M.A."/>
            <person name="Lyne M.H."/>
            <person name="Lyne R."/>
            <person name="Stewart A."/>
            <person name="Sgouros J.G."/>
            <person name="Peat N."/>
            <person name="Hayles J."/>
            <person name="Baker S.G."/>
            <person name="Basham D."/>
            <person name="Bowman S."/>
            <person name="Brooks K."/>
            <person name="Brown D."/>
            <person name="Brown S."/>
            <person name="Chillingworth T."/>
            <person name="Churcher C.M."/>
            <person name="Collins M."/>
            <person name="Connor R."/>
            <person name="Cronin A."/>
            <person name="Davis P."/>
            <person name="Feltwell T."/>
            <person name="Fraser A."/>
            <person name="Gentles S."/>
            <person name="Goble A."/>
            <person name="Hamlin N."/>
            <person name="Harris D.E."/>
            <person name="Hidalgo J."/>
            <person name="Hodgson G."/>
            <person name="Holroyd S."/>
            <person name="Hornsby T."/>
            <person name="Howarth S."/>
            <person name="Huckle E.J."/>
            <person name="Hunt S."/>
            <person name="Jagels K."/>
            <person name="James K.D."/>
            <person name="Jones L."/>
            <person name="Jones M."/>
            <person name="Leather S."/>
            <person name="McDonald S."/>
            <person name="McLean J."/>
            <person name="Mooney P."/>
            <person name="Moule S."/>
            <person name="Mungall K.L."/>
            <person name="Murphy L.D."/>
            <person name="Niblett D."/>
            <person name="Odell C."/>
            <person name="Oliver K."/>
            <person name="O'Neil S."/>
            <person name="Pearson D."/>
            <person name="Quail M.A."/>
            <person name="Rabbinowitsch E."/>
            <person name="Rutherford K.M."/>
            <person name="Rutter S."/>
            <person name="Saunders D."/>
            <person name="Seeger K."/>
            <person name="Sharp S."/>
            <person name="Skelton J."/>
            <person name="Simmonds M.N."/>
            <person name="Squares R."/>
            <person name="Squares S."/>
            <person name="Stevens K."/>
            <person name="Taylor K."/>
            <person name="Taylor R.G."/>
            <person name="Tivey A."/>
            <person name="Walsh S.V."/>
            <person name="Warren T."/>
            <person name="Whitehead S."/>
            <person name="Woodward J.R."/>
            <person name="Volckaert G."/>
            <person name="Aert R."/>
            <person name="Robben J."/>
            <person name="Grymonprez B."/>
            <person name="Weltjens I."/>
            <person name="Vanstreels E."/>
            <person name="Rieger M."/>
            <person name="Schaefer M."/>
            <person name="Mueller-Auer S."/>
            <person name="Gabel C."/>
            <person name="Fuchs M."/>
            <person name="Duesterhoeft A."/>
            <person name="Fritzc C."/>
            <person name="Holzer E."/>
            <person name="Moestl D."/>
            <person name="Hilbert H."/>
            <person name="Borzym K."/>
            <person name="Langer I."/>
            <person name="Beck A."/>
            <person name="Lehrach H."/>
            <person name="Reinhardt R."/>
            <person name="Pohl T.M."/>
            <person name="Eger P."/>
            <person name="Zimmermann W."/>
            <person name="Wedler H."/>
            <person name="Wambutt R."/>
            <person name="Purnelle B."/>
            <person name="Goffeau A."/>
            <person name="Cadieu E."/>
            <person name="Dreano S."/>
            <person name="Gloux S."/>
            <person name="Lelaure V."/>
            <person name="Mottier S."/>
            <person name="Galibert F."/>
            <person name="Aves S.J."/>
            <person name="Xiang Z."/>
            <person name="Hunt C."/>
            <person name="Moore K."/>
            <person name="Hurst S.M."/>
            <person name="Lucas M."/>
            <person name="Rochet M."/>
            <person name="Gaillardin C."/>
            <person name="Tallada V.A."/>
            <person name="Garzon A."/>
            <person name="Thode G."/>
            <person name="Daga R.R."/>
            <person name="Cruzado L."/>
            <person name="Jimenez J."/>
            <person name="Sanchez M."/>
            <person name="del Rey F."/>
            <person name="Benito J."/>
            <person name="Dominguez A."/>
            <person name="Revuelta J.L."/>
            <person name="Moreno S."/>
            <person name="Armstrong J."/>
            <person name="Forsburg S.L."/>
            <person name="Cerutti L."/>
            <person name="Lowe T."/>
            <person name="McCombie W.R."/>
            <person name="Paulsen I."/>
            <person name="Potashkin J."/>
            <person name="Shpakovski G.V."/>
            <person name="Ussery D."/>
            <person name="Barrell B.G."/>
            <person name="Nurse P."/>
        </authorList>
    </citation>
    <scope>NUCLEOTIDE SEQUENCE [LARGE SCALE GENOMIC DNA]</scope>
    <source>
        <strain>972 / ATCC 24843</strain>
    </source>
</reference>
<reference key="2">
    <citation type="journal article" date="2006" name="Nat. Biotechnol.">
        <title>ORFeome cloning and global analysis of protein localization in the fission yeast Schizosaccharomyces pombe.</title>
        <authorList>
            <person name="Matsuyama A."/>
            <person name="Arai R."/>
            <person name="Yashiroda Y."/>
            <person name="Shirai A."/>
            <person name="Kamata A."/>
            <person name="Sekido S."/>
            <person name="Kobayashi Y."/>
            <person name="Hashimoto A."/>
            <person name="Hamamoto M."/>
            <person name="Hiraoka Y."/>
            <person name="Horinouchi S."/>
            <person name="Yoshida M."/>
        </authorList>
    </citation>
    <scope>SUBCELLULAR LOCATION [LARGE SCALE ANALYSIS]</scope>
</reference>
<reference key="3">
    <citation type="journal article" date="2007" name="J. Biol. Chem.">
        <title>Regulation of histone H3 lysine 56 acetylation in Schizosaccharomyces pombe.</title>
        <authorList>
            <person name="Xhemalce B."/>
            <person name="Miller K.M."/>
            <person name="Driscoll R."/>
            <person name="Masumoto H."/>
            <person name="Jackson S.P."/>
            <person name="Kouzarides T."/>
            <person name="Verreault A."/>
            <person name="Arcangioli B."/>
        </authorList>
    </citation>
    <scope>FUNCTION</scope>
    <scope>CATALYTIC ACTIVITY</scope>
</reference>
<reference key="4">
    <citation type="journal article" date="2007" name="J. Biol. Chem.">
        <title>Acetylation of lysine 56 of histone H3 catalyzed by RTT109 and regulated by ASF1 is required for replisome integrity.</title>
        <authorList>
            <person name="Han J."/>
            <person name="Zhou H."/>
            <person name="Li Z."/>
            <person name="Xu R.-M."/>
            <person name="Zhang Z."/>
        </authorList>
    </citation>
    <scope>FUNCTION</scope>
    <scope>CATALYTIC ACTIVITY</scope>
</reference>
<reference key="5">
    <citation type="journal article" date="2011" name="Am. J. Respir. Cell Mol. Biol.">
        <title>Pneumocystis carinii expresses an active Rtt109 histone acetyltransferase.</title>
        <authorList>
            <person name="Kottom T.J."/>
            <person name="Han J."/>
            <person name="Zhang Z."/>
            <person name="Limper A.H."/>
        </authorList>
    </citation>
    <scope>FUNCTION</scope>
    <scope>CATALYTIC ACTIVITY</scope>
</reference>
<sequence>MPDLWSESILEGRKLSIYHLKSTLEKCPFLFGQSKKSKDFQFGSHLFLVEEQNVFIFGMECIVYEKNKEFIVFVSKADSTGFGSKGVSCNSLAFCCLVTLIDGLRKQGAENVTLTLFAIAQGQYLFPESVDNGQKHVLNDSGLLRWWVNCLEKLRKYYTDSEAPNDSEKQKNSTLLPKAYLFVPGLENIRSYLPNRHWIESNAITTGKAVEELPRFPDDPKCRYLCELQDEKSDMSVEEFWDTLTYRQECSSGKLVGFFTLQLQFYQTREFIAKDNFGDSGVMIPAKLYRVTYDTLLKHPFGSLSDAQSSTEKFLSNTLSAVQNLKDFHYKRYKLDICGLAKRDDRKNHNHSKPATQANILQPRKKVKK</sequence>